<reference key="1">
    <citation type="journal article" date="1999" name="Nature">
        <title>Sequence and analysis of chromosome 2 of the plant Arabidopsis thaliana.</title>
        <authorList>
            <person name="Lin X."/>
            <person name="Kaul S."/>
            <person name="Rounsley S.D."/>
            <person name="Shea T.P."/>
            <person name="Benito M.-I."/>
            <person name="Town C.D."/>
            <person name="Fujii C.Y."/>
            <person name="Mason T.M."/>
            <person name="Bowman C.L."/>
            <person name="Barnstead M.E."/>
            <person name="Feldblyum T.V."/>
            <person name="Buell C.R."/>
            <person name="Ketchum K.A."/>
            <person name="Lee J.J."/>
            <person name="Ronning C.M."/>
            <person name="Koo H.L."/>
            <person name="Moffat K.S."/>
            <person name="Cronin L.A."/>
            <person name="Shen M."/>
            <person name="Pai G."/>
            <person name="Van Aken S."/>
            <person name="Umayam L."/>
            <person name="Tallon L.J."/>
            <person name="Gill J.E."/>
            <person name="Adams M.D."/>
            <person name="Carrera A.J."/>
            <person name="Creasy T.H."/>
            <person name="Goodman H.M."/>
            <person name="Somerville C.R."/>
            <person name="Copenhaver G.P."/>
            <person name="Preuss D."/>
            <person name="Nierman W.C."/>
            <person name="White O."/>
            <person name="Eisen J.A."/>
            <person name="Salzberg S.L."/>
            <person name="Fraser C.M."/>
            <person name="Venter J.C."/>
        </authorList>
    </citation>
    <scope>NUCLEOTIDE SEQUENCE [LARGE SCALE GENOMIC DNA]</scope>
    <source>
        <strain>cv. Columbia</strain>
    </source>
</reference>
<reference key="2">
    <citation type="journal article" date="2017" name="Plant J.">
        <title>Araport11: a complete reannotation of the Arabidopsis thaliana reference genome.</title>
        <authorList>
            <person name="Cheng C.Y."/>
            <person name="Krishnakumar V."/>
            <person name="Chan A.P."/>
            <person name="Thibaud-Nissen F."/>
            <person name="Schobel S."/>
            <person name="Town C.D."/>
        </authorList>
    </citation>
    <scope>GENOME REANNOTATION</scope>
    <source>
        <strain>cv. Columbia</strain>
    </source>
</reference>
<reference key="3">
    <citation type="journal article" date="2003" name="Science">
        <title>Empirical analysis of transcriptional activity in the Arabidopsis genome.</title>
        <authorList>
            <person name="Yamada K."/>
            <person name="Lim J."/>
            <person name="Dale J.M."/>
            <person name="Chen H."/>
            <person name="Shinn P."/>
            <person name="Palm C.J."/>
            <person name="Southwick A.M."/>
            <person name="Wu H.C."/>
            <person name="Kim C.J."/>
            <person name="Nguyen M."/>
            <person name="Pham P.K."/>
            <person name="Cheuk R.F."/>
            <person name="Karlin-Newmann G."/>
            <person name="Liu S.X."/>
            <person name="Lam B."/>
            <person name="Sakano H."/>
            <person name="Wu T."/>
            <person name="Yu G."/>
            <person name="Miranda M."/>
            <person name="Quach H.L."/>
            <person name="Tripp M."/>
            <person name="Chang C.H."/>
            <person name="Lee J.M."/>
            <person name="Toriumi M.J."/>
            <person name="Chan M.M."/>
            <person name="Tang C.C."/>
            <person name="Onodera C.S."/>
            <person name="Deng J.M."/>
            <person name="Akiyama K."/>
            <person name="Ansari Y."/>
            <person name="Arakawa T."/>
            <person name="Banh J."/>
            <person name="Banno F."/>
            <person name="Bowser L."/>
            <person name="Brooks S.Y."/>
            <person name="Carninci P."/>
            <person name="Chao Q."/>
            <person name="Choy N."/>
            <person name="Enju A."/>
            <person name="Goldsmith A.D."/>
            <person name="Gurjal M."/>
            <person name="Hansen N.F."/>
            <person name="Hayashizaki Y."/>
            <person name="Johnson-Hopson C."/>
            <person name="Hsuan V.W."/>
            <person name="Iida K."/>
            <person name="Karnes M."/>
            <person name="Khan S."/>
            <person name="Koesema E."/>
            <person name="Ishida J."/>
            <person name="Jiang P.X."/>
            <person name="Jones T."/>
            <person name="Kawai J."/>
            <person name="Kamiya A."/>
            <person name="Meyers C."/>
            <person name="Nakajima M."/>
            <person name="Narusaka M."/>
            <person name="Seki M."/>
            <person name="Sakurai T."/>
            <person name="Satou M."/>
            <person name="Tamse R."/>
            <person name="Vaysberg M."/>
            <person name="Wallender E.K."/>
            <person name="Wong C."/>
            <person name="Yamamura Y."/>
            <person name="Yuan S."/>
            <person name="Shinozaki K."/>
            <person name="Davis R.W."/>
            <person name="Theologis A."/>
            <person name="Ecker J.R."/>
        </authorList>
    </citation>
    <scope>NUCLEOTIDE SEQUENCE [LARGE SCALE MRNA]</scope>
    <source>
        <strain>cv. Columbia</strain>
    </source>
</reference>
<reference key="4">
    <citation type="submission" date="2005-02" db="EMBL/GenBank/DDBJ databases">
        <title>Arabidopsis ORF clone.</title>
        <authorList>
            <person name="Shinn P."/>
            <person name="Chen H."/>
            <person name="Cheuk R.F."/>
            <person name="Kim C.J."/>
            <person name="Ecker J.R."/>
        </authorList>
    </citation>
    <scope>NUCLEOTIDE SEQUENCE [LARGE SCALE MRNA]</scope>
    <source>
        <strain>cv. Columbia</strain>
    </source>
</reference>
<reference key="5">
    <citation type="journal article" date="2004" name="Prog. Lipid Res.">
        <title>GDSL family of serine esterases/lipases.</title>
        <authorList>
            <person name="Akoh C.C."/>
            <person name="Lee G.-C."/>
            <person name="Liaw Y.-C."/>
            <person name="Huang T.-H."/>
            <person name="Shaw J.-F."/>
        </authorList>
    </citation>
    <scope>REVIEW</scope>
</reference>
<reference key="6">
    <citation type="journal article" date="2008" name="Pak. J. Biol. Sci.">
        <title>Sequence analysis of GDSL lipase gene family in Arabidopsis thaliana.</title>
        <authorList>
            <person name="Ling H."/>
        </authorList>
    </citation>
    <scope>GENE FAMILY</scope>
</reference>
<keyword id="KW-0325">Glycoprotein</keyword>
<keyword id="KW-0378">Hydrolase</keyword>
<keyword id="KW-0442">Lipid degradation</keyword>
<keyword id="KW-0443">Lipid metabolism</keyword>
<keyword id="KW-1185">Reference proteome</keyword>
<keyword id="KW-0964">Secreted</keyword>
<keyword id="KW-0732">Signal</keyword>
<accession>O80443</accession>
<accession>Q8W4R1</accession>
<protein>
    <recommendedName>
        <fullName>GDSL esterase/lipase At2g38180</fullName>
        <ecNumber>3.1.1.-</ecNumber>
    </recommendedName>
    <alternativeName>
        <fullName>Extracellular lipase At2g38180</fullName>
    </alternativeName>
</protein>
<name>GDL46_ARATH</name>
<sequence length="312" mass="35405">MVGPVRPQIVLFGSSIVQYSFTDRGWGATLADLYSRTADIILRGYAGWNSRFALKVLHQVFPKDAVIQPSLVIVYFGGNDSTHPHPSGHGPHVPLSEFIENMRKIGEHLLSLSDKTRVIFLTPPPMNEKQIEIVFGDAIKGRSNELCRPYAEELLNLCREINVKGIDIWTAIQQQDDWLNSCFTDGIHFTAKASEIVVKEILKVLRGADWKPSLYWKSLPVEFPFDFDAPNSISLHDLELTRNNHFESPHLVSLCEQELTRNEQLEPPHPVSLCDHELTRNEQLEPPHPVSLCDHELTQNEQLEPPQPTARL</sequence>
<evidence type="ECO:0000255" key="1"/>
<evidence type="ECO:0000256" key="2">
    <source>
        <dbReference type="SAM" id="MobiDB-lite"/>
    </source>
</evidence>
<evidence type="ECO:0000305" key="3"/>
<proteinExistence type="evidence at transcript level"/>
<organism>
    <name type="scientific">Arabidopsis thaliana</name>
    <name type="common">Mouse-ear cress</name>
    <dbReference type="NCBI Taxonomy" id="3702"/>
    <lineage>
        <taxon>Eukaryota</taxon>
        <taxon>Viridiplantae</taxon>
        <taxon>Streptophyta</taxon>
        <taxon>Embryophyta</taxon>
        <taxon>Tracheophyta</taxon>
        <taxon>Spermatophyta</taxon>
        <taxon>Magnoliopsida</taxon>
        <taxon>eudicotyledons</taxon>
        <taxon>Gunneridae</taxon>
        <taxon>Pentapetalae</taxon>
        <taxon>rosids</taxon>
        <taxon>malvids</taxon>
        <taxon>Brassicales</taxon>
        <taxon>Brassicaceae</taxon>
        <taxon>Camelineae</taxon>
        <taxon>Arabidopsis</taxon>
    </lineage>
</organism>
<gene>
    <name type="ordered locus">At2g38180</name>
    <name type="ORF">F16M14.11</name>
</gene>
<feature type="signal peptide" evidence="1">
    <location>
        <begin position="1"/>
        <end position="22"/>
    </location>
</feature>
<feature type="chain" id="PRO_0000367387" description="GDSL esterase/lipase At2g38180">
    <location>
        <begin position="23"/>
        <end position="312"/>
    </location>
</feature>
<feature type="region of interest" description="Disordered" evidence="2">
    <location>
        <begin position="285"/>
        <end position="312"/>
    </location>
</feature>
<feature type="glycosylation site" description="N-linked (GlcNAc...) asparagine" evidence="1">
    <location>
        <position position="79"/>
    </location>
</feature>
<feature type="sequence conflict" description="In Ref. 3; AAL31218." evidence="3" ref="3">
    <original>C</original>
    <variation>F</variation>
    <location>
        <position position="255"/>
    </location>
</feature>
<comment type="subcellular location">
    <subcellularLocation>
        <location evidence="3">Secreted</location>
    </subcellularLocation>
</comment>
<comment type="similarity">
    <text evidence="3">Belongs to the 'GDSL' lipolytic enzyme family.</text>
</comment>
<comment type="caution">
    <text evidence="3">Lacks the conserved active site 'GDSL' motif. Its enzyme activity is therefore unsure.</text>
</comment>
<dbReference type="EC" id="3.1.1.-"/>
<dbReference type="EMBL" id="AC003028">
    <property type="protein sequence ID" value="AAC27167.1"/>
    <property type="molecule type" value="Genomic_DNA"/>
</dbReference>
<dbReference type="EMBL" id="CP002685">
    <property type="protein sequence ID" value="AEC09502.1"/>
    <property type="molecule type" value="Genomic_DNA"/>
</dbReference>
<dbReference type="EMBL" id="AY060593">
    <property type="protein sequence ID" value="AAL31218.1"/>
    <property type="molecule type" value="mRNA"/>
</dbReference>
<dbReference type="EMBL" id="BT021087">
    <property type="protein sequence ID" value="AAX12857.1"/>
    <property type="molecule type" value="mRNA"/>
</dbReference>
<dbReference type="EMBL" id="BT021116">
    <property type="protein sequence ID" value="AAX12886.1"/>
    <property type="molecule type" value="mRNA"/>
</dbReference>
<dbReference type="PIR" id="T01250">
    <property type="entry name" value="T01250"/>
</dbReference>
<dbReference type="RefSeq" id="NP_565883.1">
    <property type="nucleotide sequence ID" value="NM_129374.4"/>
</dbReference>
<dbReference type="SMR" id="O80443"/>
<dbReference type="FunCoup" id="O80443">
    <property type="interactions" value="131"/>
</dbReference>
<dbReference type="STRING" id="3702.O80443"/>
<dbReference type="GlyGen" id="O80443">
    <property type="glycosylation" value="1 site"/>
</dbReference>
<dbReference type="PaxDb" id="3702-AT2G38180.1"/>
<dbReference type="ProteomicsDB" id="247095"/>
<dbReference type="EnsemblPlants" id="AT2G38180.1">
    <property type="protein sequence ID" value="AT2G38180.1"/>
    <property type="gene ID" value="AT2G38180"/>
</dbReference>
<dbReference type="GeneID" id="818396"/>
<dbReference type="Gramene" id="AT2G38180.1">
    <property type="protein sequence ID" value="AT2G38180.1"/>
    <property type="gene ID" value="AT2G38180"/>
</dbReference>
<dbReference type="KEGG" id="ath:AT2G38180"/>
<dbReference type="Araport" id="AT2G38180"/>
<dbReference type="TAIR" id="AT2G38180"/>
<dbReference type="eggNOG" id="KOG3035">
    <property type="taxonomic scope" value="Eukaryota"/>
</dbReference>
<dbReference type="HOGENOM" id="CLU_051989_0_2_1"/>
<dbReference type="InParanoid" id="O80443"/>
<dbReference type="OMA" id="NDSTHPH"/>
<dbReference type="OrthoDB" id="671439at2759"/>
<dbReference type="PhylomeDB" id="O80443"/>
<dbReference type="PRO" id="PR:O80443"/>
<dbReference type="Proteomes" id="UP000006548">
    <property type="component" value="Chromosome 2"/>
</dbReference>
<dbReference type="ExpressionAtlas" id="O80443">
    <property type="expression patterns" value="baseline and differential"/>
</dbReference>
<dbReference type="GO" id="GO:0005576">
    <property type="term" value="C:extracellular region"/>
    <property type="evidence" value="ECO:0007669"/>
    <property type="project" value="UniProtKB-SubCell"/>
</dbReference>
<dbReference type="GO" id="GO:0016788">
    <property type="term" value="F:hydrolase activity, acting on ester bonds"/>
    <property type="evidence" value="ECO:0007669"/>
    <property type="project" value="InterPro"/>
</dbReference>
<dbReference type="GO" id="GO:0016042">
    <property type="term" value="P:lipid catabolic process"/>
    <property type="evidence" value="ECO:0007669"/>
    <property type="project" value="UniProtKB-KW"/>
</dbReference>
<dbReference type="CDD" id="cd01838">
    <property type="entry name" value="Isoamyl_acetate_hydrolase_like"/>
    <property type="match status" value="1"/>
</dbReference>
<dbReference type="FunFam" id="3.40.50.1110:FF:000002">
    <property type="entry name" value="isoamyl acetate-hydrolyzing esterase 1 homolog"/>
    <property type="match status" value="1"/>
</dbReference>
<dbReference type="Gene3D" id="3.40.50.1110">
    <property type="entry name" value="SGNH hydrolase"/>
    <property type="match status" value="1"/>
</dbReference>
<dbReference type="InterPro" id="IPR001087">
    <property type="entry name" value="GDSL"/>
</dbReference>
<dbReference type="InterPro" id="IPR045136">
    <property type="entry name" value="Iah1-like"/>
</dbReference>
<dbReference type="InterPro" id="IPR036514">
    <property type="entry name" value="SGNH_hydro_sf"/>
</dbReference>
<dbReference type="PANTHER" id="PTHR14209">
    <property type="entry name" value="ISOAMYL ACETATE-HYDROLYZING ESTERASE 1"/>
    <property type="match status" value="1"/>
</dbReference>
<dbReference type="PANTHER" id="PTHR14209:SF37">
    <property type="entry name" value="SGNH HYDROLASE-TYPE ESTERASE DOMAIN-CONTAINING PROTEIN"/>
    <property type="match status" value="1"/>
</dbReference>
<dbReference type="Pfam" id="PF00657">
    <property type="entry name" value="Lipase_GDSL"/>
    <property type="match status" value="1"/>
</dbReference>
<dbReference type="SUPFAM" id="SSF52266">
    <property type="entry name" value="SGNH hydrolase"/>
    <property type="match status" value="1"/>
</dbReference>